<comment type="function">
    <text evidence="1">Synthesizes selenophosphate from selenide and ATP.</text>
</comment>
<comment type="catalytic activity">
    <reaction evidence="1">
        <text>hydrogenselenide + ATP + H2O = selenophosphate + AMP + phosphate + 2 H(+)</text>
        <dbReference type="Rhea" id="RHEA:18737"/>
        <dbReference type="ChEBI" id="CHEBI:15377"/>
        <dbReference type="ChEBI" id="CHEBI:15378"/>
        <dbReference type="ChEBI" id="CHEBI:16144"/>
        <dbReference type="ChEBI" id="CHEBI:29317"/>
        <dbReference type="ChEBI" id="CHEBI:30616"/>
        <dbReference type="ChEBI" id="CHEBI:43474"/>
        <dbReference type="ChEBI" id="CHEBI:456215"/>
        <dbReference type="EC" id="2.7.9.3"/>
    </reaction>
</comment>
<comment type="cofactor">
    <cofactor evidence="1">
        <name>Mg(2+)</name>
        <dbReference type="ChEBI" id="CHEBI:18420"/>
    </cofactor>
    <text evidence="1">Binds 1 Mg(2+) ion per monomer.</text>
</comment>
<comment type="subunit">
    <text evidence="1">Homodimer.</text>
</comment>
<comment type="similarity">
    <text evidence="1">Belongs to the selenophosphate synthase 1 family. Class I subfamily.</text>
</comment>
<evidence type="ECO:0000255" key="1">
    <source>
        <dbReference type="HAMAP-Rule" id="MF_00625"/>
    </source>
</evidence>
<name>SELD_BURO0</name>
<sequence length="354" mass="36198">MTEATQAQPAVPRLTSLSHGGGCGCKIAPGVLSELLKRATPPALFPDLLVGTETSDDAAVYRLNDEQAIVATTDFFMPIVDDPFDFGRIAATNALSDVYAMGGKPILALALVGMPINVLPHETIAAVLRGGESVCADAGIPVAGGHSIDSVEPIYGLAAIGVVHPSRVKRNAAARAGDVLVLGKPLGVGVLSAALKKNQLDADGYAQMVATTTKLNRPGAELAALPGVHALTDVTGFGLLGHTLELARGAQLTARVHYASLPWLAGVETFVADGVFTGASGRNWAAYGTDVRLADGLPPVAQALLTDPQTSGGLLVACAPEAVDDVLACFRADGFDRAAVIGEMVDGPARVDVA</sequence>
<feature type="chain" id="PRO_1000130516" description="Selenide, water dikinase">
    <location>
        <begin position="1"/>
        <end position="354"/>
    </location>
</feature>
<feature type="active site" evidence="1">
    <location>
        <position position="23"/>
    </location>
</feature>
<feature type="binding site" description="in other chain" evidence="1">
    <location>
        <position position="26"/>
    </location>
    <ligand>
        <name>ATP</name>
        <dbReference type="ChEBI" id="CHEBI:30616"/>
        <note>ligand shared between dimeric partners</note>
    </ligand>
</feature>
<feature type="binding site" description="in other chain" evidence="1">
    <location>
        <begin position="54"/>
        <end position="56"/>
    </location>
    <ligand>
        <name>ATP</name>
        <dbReference type="ChEBI" id="CHEBI:30616"/>
        <note>ligand shared between dimeric partners</note>
    </ligand>
</feature>
<feature type="binding site" evidence="1">
    <location>
        <position position="57"/>
    </location>
    <ligand>
        <name>Mg(2+)</name>
        <dbReference type="ChEBI" id="CHEBI:18420"/>
    </ligand>
</feature>
<feature type="binding site" description="in other chain" evidence="1">
    <location>
        <position position="74"/>
    </location>
    <ligand>
        <name>ATP</name>
        <dbReference type="ChEBI" id="CHEBI:30616"/>
        <note>ligand shared between dimeric partners</note>
    </ligand>
</feature>
<feature type="binding site" description="in other chain" evidence="1">
    <location>
        <position position="97"/>
    </location>
    <ligand>
        <name>ATP</name>
        <dbReference type="ChEBI" id="CHEBI:30616"/>
        <note>ligand shared between dimeric partners</note>
    </ligand>
</feature>
<feature type="binding site" evidence="1">
    <location>
        <position position="97"/>
    </location>
    <ligand>
        <name>Mg(2+)</name>
        <dbReference type="ChEBI" id="CHEBI:18420"/>
    </ligand>
</feature>
<feature type="binding site" evidence="1">
    <location>
        <begin position="145"/>
        <end position="147"/>
    </location>
    <ligand>
        <name>ATP</name>
        <dbReference type="ChEBI" id="CHEBI:30616"/>
        <note>ligand shared between dimeric partners</note>
    </ligand>
</feature>
<feature type="binding site" evidence="1">
    <location>
        <position position="233"/>
    </location>
    <ligand>
        <name>Mg(2+)</name>
        <dbReference type="ChEBI" id="CHEBI:18420"/>
    </ligand>
</feature>
<feature type="site" description="Important for catalytic activity" evidence="1">
    <location>
        <position position="26"/>
    </location>
</feature>
<accession>B1K568</accession>
<protein>
    <recommendedName>
        <fullName evidence="1">Selenide, water dikinase</fullName>
        <ecNumber evidence="1">2.7.9.3</ecNumber>
    </recommendedName>
    <alternativeName>
        <fullName evidence="1">Selenium donor protein</fullName>
    </alternativeName>
    <alternativeName>
        <fullName evidence="1">Selenophosphate synthase</fullName>
    </alternativeName>
</protein>
<dbReference type="EC" id="2.7.9.3" evidence="1"/>
<dbReference type="EMBL" id="CP000959">
    <property type="protein sequence ID" value="ACA94042.1"/>
    <property type="molecule type" value="Genomic_DNA"/>
</dbReference>
<dbReference type="SMR" id="B1K568"/>
<dbReference type="KEGG" id="bcm:Bcenmc03_4912"/>
<dbReference type="HOGENOM" id="CLU_032859_0_1_4"/>
<dbReference type="Proteomes" id="UP000002169">
    <property type="component" value="Chromosome 2"/>
</dbReference>
<dbReference type="GO" id="GO:0005737">
    <property type="term" value="C:cytoplasm"/>
    <property type="evidence" value="ECO:0007669"/>
    <property type="project" value="TreeGrafter"/>
</dbReference>
<dbReference type="GO" id="GO:0005524">
    <property type="term" value="F:ATP binding"/>
    <property type="evidence" value="ECO:0007669"/>
    <property type="project" value="UniProtKB-UniRule"/>
</dbReference>
<dbReference type="GO" id="GO:0000287">
    <property type="term" value="F:magnesium ion binding"/>
    <property type="evidence" value="ECO:0007669"/>
    <property type="project" value="UniProtKB-UniRule"/>
</dbReference>
<dbReference type="GO" id="GO:0004756">
    <property type="term" value="F:selenide, water dikinase activity"/>
    <property type="evidence" value="ECO:0007669"/>
    <property type="project" value="UniProtKB-UniRule"/>
</dbReference>
<dbReference type="GO" id="GO:0016260">
    <property type="term" value="P:selenocysteine biosynthetic process"/>
    <property type="evidence" value="ECO:0007669"/>
    <property type="project" value="InterPro"/>
</dbReference>
<dbReference type="CDD" id="cd02195">
    <property type="entry name" value="SelD"/>
    <property type="match status" value="1"/>
</dbReference>
<dbReference type="FunFam" id="3.30.1330.10:FF:000003">
    <property type="entry name" value="Selenide, water dikinase"/>
    <property type="match status" value="1"/>
</dbReference>
<dbReference type="FunFam" id="3.90.650.10:FF:000004">
    <property type="entry name" value="Selenide, water dikinase"/>
    <property type="match status" value="1"/>
</dbReference>
<dbReference type="Gene3D" id="3.90.650.10">
    <property type="entry name" value="PurM-like C-terminal domain"/>
    <property type="match status" value="1"/>
</dbReference>
<dbReference type="Gene3D" id="3.30.1330.10">
    <property type="entry name" value="PurM-like, N-terminal domain"/>
    <property type="match status" value="1"/>
</dbReference>
<dbReference type="HAMAP" id="MF_00625">
    <property type="entry name" value="SelD"/>
    <property type="match status" value="1"/>
</dbReference>
<dbReference type="InterPro" id="IPR010918">
    <property type="entry name" value="PurM-like_C_dom"/>
</dbReference>
<dbReference type="InterPro" id="IPR036676">
    <property type="entry name" value="PurM-like_C_sf"/>
</dbReference>
<dbReference type="InterPro" id="IPR016188">
    <property type="entry name" value="PurM-like_N"/>
</dbReference>
<dbReference type="InterPro" id="IPR036921">
    <property type="entry name" value="PurM-like_N_sf"/>
</dbReference>
<dbReference type="InterPro" id="IPR023061">
    <property type="entry name" value="SelD_I"/>
</dbReference>
<dbReference type="InterPro" id="IPR004536">
    <property type="entry name" value="SPS/SelD"/>
</dbReference>
<dbReference type="NCBIfam" id="NF002098">
    <property type="entry name" value="PRK00943.1"/>
    <property type="match status" value="1"/>
</dbReference>
<dbReference type="NCBIfam" id="TIGR00476">
    <property type="entry name" value="selD"/>
    <property type="match status" value="1"/>
</dbReference>
<dbReference type="PANTHER" id="PTHR10256:SF0">
    <property type="entry name" value="INACTIVE SELENIDE, WATER DIKINASE-LIKE PROTEIN-RELATED"/>
    <property type="match status" value="1"/>
</dbReference>
<dbReference type="PANTHER" id="PTHR10256">
    <property type="entry name" value="SELENIDE, WATER DIKINASE"/>
    <property type="match status" value="1"/>
</dbReference>
<dbReference type="Pfam" id="PF00586">
    <property type="entry name" value="AIRS"/>
    <property type="match status" value="1"/>
</dbReference>
<dbReference type="Pfam" id="PF02769">
    <property type="entry name" value="AIRS_C"/>
    <property type="match status" value="1"/>
</dbReference>
<dbReference type="PIRSF" id="PIRSF036407">
    <property type="entry name" value="Selenphspht_syn"/>
    <property type="match status" value="1"/>
</dbReference>
<dbReference type="SUPFAM" id="SSF56042">
    <property type="entry name" value="PurM C-terminal domain-like"/>
    <property type="match status" value="1"/>
</dbReference>
<dbReference type="SUPFAM" id="SSF55326">
    <property type="entry name" value="PurM N-terminal domain-like"/>
    <property type="match status" value="1"/>
</dbReference>
<gene>
    <name evidence="1" type="primary">selD</name>
    <name type="ordered locus">Bcenmc03_4912</name>
</gene>
<keyword id="KW-0067">ATP-binding</keyword>
<keyword id="KW-0418">Kinase</keyword>
<keyword id="KW-0460">Magnesium</keyword>
<keyword id="KW-0479">Metal-binding</keyword>
<keyword id="KW-0547">Nucleotide-binding</keyword>
<keyword id="KW-0711">Selenium</keyword>
<keyword id="KW-0808">Transferase</keyword>
<proteinExistence type="inferred from homology"/>
<reference key="1">
    <citation type="submission" date="2008-02" db="EMBL/GenBank/DDBJ databases">
        <title>Complete sequence of chromosome 2 of Burkholderia cenocepacia MC0-3.</title>
        <authorList>
            <person name="Copeland A."/>
            <person name="Lucas S."/>
            <person name="Lapidus A."/>
            <person name="Barry K."/>
            <person name="Bruce D."/>
            <person name="Goodwin L."/>
            <person name="Glavina del Rio T."/>
            <person name="Dalin E."/>
            <person name="Tice H."/>
            <person name="Pitluck S."/>
            <person name="Chain P."/>
            <person name="Malfatti S."/>
            <person name="Shin M."/>
            <person name="Vergez L."/>
            <person name="Schmutz J."/>
            <person name="Larimer F."/>
            <person name="Land M."/>
            <person name="Hauser L."/>
            <person name="Kyrpides N."/>
            <person name="Mikhailova N."/>
            <person name="Tiedje J."/>
            <person name="Richardson P."/>
        </authorList>
    </citation>
    <scope>NUCLEOTIDE SEQUENCE [LARGE SCALE GENOMIC DNA]</scope>
    <source>
        <strain>MC0-3</strain>
    </source>
</reference>
<organism>
    <name type="scientific">Burkholderia orbicola (strain MC0-3)</name>
    <dbReference type="NCBI Taxonomy" id="406425"/>
    <lineage>
        <taxon>Bacteria</taxon>
        <taxon>Pseudomonadati</taxon>
        <taxon>Pseudomonadota</taxon>
        <taxon>Betaproteobacteria</taxon>
        <taxon>Burkholderiales</taxon>
        <taxon>Burkholderiaceae</taxon>
        <taxon>Burkholderia</taxon>
        <taxon>Burkholderia cepacia complex</taxon>
        <taxon>Burkholderia orbicola</taxon>
    </lineage>
</organism>